<sequence>MTLPAPRDGSPAVPRLADIAAQAQVSEATASRVLNGRPASRXSTRQRVLAALDLLGYERPTRLRRRSAGLIGLVTPELTNPIFPAFAQVVEQALAGYGYTPVLCTQIPGGATEDELVEQLEERGVNGIVFLSGLHADTTADPRRYARLTERGVPFVLINGYNERIRAPFVSPDDRSAVRMAVRHLADLGHRRIGLAVGPDRYVPSRRKAEGFADALAEILGTPRDQAEQHVRRTLFSVEGGHAAAGSLLEQGCTGLVCGSDLMALGAVRAARERGLDVPADLSVVGFDDSQLVAFTDPPLTTVRQPVHAMATAAVGALLEEIAHQTVQRTEFVFQPELVVRGSTAQWVPGG</sequence>
<protein>
    <recommendedName>
        <fullName>Uncharacterized HTH-type transcriptional regulator in aml 5'region</fullName>
    </recommendedName>
    <alternativeName>
        <fullName>ORF-S1</fullName>
    </alternativeName>
</protein>
<reference key="1">
    <citation type="submission" date="1996-09" db="EMBL/GenBank/DDBJ databases">
        <authorList>
            <person name="van Wezel G.P."/>
            <person name="White J."/>
            <person name="Young P."/>
            <person name="Postma P."/>
            <person name="Bibb M.J."/>
        </authorList>
    </citation>
    <scope>NUCLEOTIDE SEQUENCE [GENOMIC DNA]</scope>
</reference>
<reference key="2">
    <citation type="journal article" date="1987" name="J. Bacteriol.">
        <title>Alpha-amylase gene of Streptomyces limosus: nucleotide sequence, expression motifs, and amino acid sequence homology to mammalian and invertebrate alpha-amylases.</title>
        <authorList>
            <person name="Long C.M."/>
            <person name="Virolle M.-J."/>
            <person name="Chang S.-Y."/>
            <person name="Chang S."/>
            <person name="Bibb M.J."/>
        </authorList>
    </citation>
    <scope>NUCLEOTIDE SEQUENCE [GENOMIC DNA] OF 325-351</scope>
</reference>
<proteinExistence type="predicted"/>
<keyword id="KW-0238">DNA-binding</keyword>
<keyword id="KW-0804">Transcription</keyword>
<keyword id="KW-0805">Transcription regulation</keyword>
<evidence type="ECO:0000255" key="1">
    <source>
        <dbReference type="PROSITE-ProRule" id="PRU00111"/>
    </source>
</evidence>
<name>YAML_STRLM</name>
<organism>
    <name type="scientific">Streptomyces limosus</name>
    <name type="common">Streptomyces albidoflavus</name>
    <dbReference type="NCBI Taxonomy" id="1947"/>
    <lineage>
        <taxon>Bacteria</taxon>
        <taxon>Bacillati</taxon>
        <taxon>Actinomycetota</taxon>
        <taxon>Actinomycetes</taxon>
        <taxon>Kitasatosporales</taxon>
        <taxon>Streptomycetaceae</taxon>
        <taxon>Streptomyces</taxon>
        <taxon>Streptomyces albidoflavus group</taxon>
    </lineage>
</organism>
<feature type="chain" id="PRO_0000108012" description="Uncharacterized HTH-type transcriptional regulator in aml 5'region">
    <location>
        <begin position="1"/>
        <end position="351"/>
    </location>
</feature>
<feature type="domain" description="HTH lacI-type" evidence="1">
    <location>
        <begin position="14"/>
        <end position="69"/>
    </location>
</feature>
<feature type="DNA-binding region" description="H-T-H motif" evidence="1">
    <location>
        <begin position="16"/>
        <end position="35"/>
    </location>
</feature>
<accession>P23823</accession>
<comment type="function">
    <text>Putative sugar-binding regulatory protein for the alpha-amylase gene.</text>
</comment>
<dbReference type="EMBL" id="Y08304">
    <property type="protein sequence ID" value="CAA69613.1"/>
    <property type="molecule type" value="Genomic_DNA"/>
</dbReference>
<dbReference type="EMBL" id="M18244">
    <property type="protein sequence ID" value="AAA88553.1"/>
    <property type="molecule type" value="Genomic_DNA"/>
</dbReference>
<dbReference type="GO" id="GO:0003700">
    <property type="term" value="F:DNA-binding transcription factor activity"/>
    <property type="evidence" value="ECO:0007669"/>
    <property type="project" value="TreeGrafter"/>
</dbReference>
<dbReference type="GO" id="GO:0000976">
    <property type="term" value="F:transcription cis-regulatory region binding"/>
    <property type="evidence" value="ECO:0007669"/>
    <property type="project" value="TreeGrafter"/>
</dbReference>
<dbReference type="CDD" id="cd01392">
    <property type="entry name" value="HTH_LacI"/>
    <property type="match status" value="1"/>
</dbReference>
<dbReference type="CDD" id="cd06292">
    <property type="entry name" value="PBP1_AglR_RafR-like"/>
    <property type="match status" value="1"/>
</dbReference>
<dbReference type="Gene3D" id="3.40.50.2300">
    <property type="match status" value="2"/>
</dbReference>
<dbReference type="Gene3D" id="1.10.260.40">
    <property type="entry name" value="lambda repressor-like DNA-binding domains"/>
    <property type="match status" value="1"/>
</dbReference>
<dbReference type="InterPro" id="IPR000843">
    <property type="entry name" value="HTH_LacI"/>
</dbReference>
<dbReference type="InterPro" id="IPR046335">
    <property type="entry name" value="LacI/GalR-like_sensor"/>
</dbReference>
<dbReference type="InterPro" id="IPR010982">
    <property type="entry name" value="Lambda_DNA-bd_dom_sf"/>
</dbReference>
<dbReference type="InterPro" id="IPR028082">
    <property type="entry name" value="Peripla_BP_I"/>
</dbReference>
<dbReference type="PANTHER" id="PTHR30146">
    <property type="entry name" value="LACI-RELATED TRANSCRIPTIONAL REPRESSOR"/>
    <property type="match status" value="1"/>
</dbReference>
<dbReference type="PANTHER" id="PTHR30146:SF153">
    <property type="entry name" value="LACTOSE OPERON REPRESSOR"/>
    <property type="match status" value="1"/>
</dbReference>
<dbReference type="Pfam" id="PF00356">
    <property type="entry name" value="LacI"/>
    <property type="match status" value="1"/>
</dbReference>
<dbReference type="Pfam" id="PF13377">
    <property type="entry name" value="Peripla_BP_3"/>
    <property type="match status" value="1"/>
</dbReference>
<dbReference type="SMART" id="SM00354">
    <property type="entry name" value="HTH_LACI"/>
    <property type="match status" value="1"/>
</dbReference>
<dbReference type="SUPFAM" id="SSF47413">
    <property type="entry name" value="lambda repressor-like DNA-binding domains"/>
    <property type="match status" value="1"/>
</dbReference>
<dbReference type="SUPFAM" id="SSF53822">
    <property type="entry name" value="Periplasmic binding protein-like I"/>
    <property type="match status" value="1"/>
</dbReference>
<dbReference type="PROSITE" id="PS00356">
    <property type="entry name" value="HTH_LACI_1"/>
    <property type="match status" value="1"/>
</dbReference>
<dbReference type="PROSITE" id="PS50932">
    <property type="entry name" value="HTH_LACI_2"/>
    <property type="match status" value="1"/>
</dbReference>